<protein>
    <recommendedName>
        <fullName evidence="1">Dihydroorotase</fullName>
        <shortName evidence="1">DHOase</shortName>
        <ecNumber evidence="1">3.5.2.3</ecNumber>
    </recommendedName>
</protein>
<gene>
    <name evidence="1" type="primary">pyrC</name>
    <name type="ordered locus">ACIAD1150</name>
</gene>
<reference key="1">
    <citation type="journal article" date="2004" name="Nucleic Acids Res.">
        <title>Unique features revealed by the genome sequence of Acinetobacter sp. ADP1, a versatile and naturally transformation competent bacterium.</title>
        <authorList>
            <person name="Barbe V."/>
            <person name="Vallenet D."/>
            <person name="Fonknechten N."/>
            <person name="Kreimeyer A."/>
            <person name="Oztas S."/>
            <person name="Labarre L."/>
            <person name="Cruveiller S."/>
            <person name="Robert C."/>
            <person name="Duprat S."/>
            <person name="Wincker P."/>
            <person name="Ornston L.N."/>
            <person name="Weissenbach J."/>
            <person name="Marliere P."/>
            <person name="Cohen G.N."/>
            <person name="Medigue C."/>
        </authorList>
    </citation>
    <scope>NUCLEOTIDE SEQUENCE [LARGE SCALE GENOMIC DNA]</scope>
    <source>
        <strain>ATCC 33305 / BD413 / ADP1</strain>
    </source>
</reference>
<name>PYRC_ACIAD</name>
<comment type="function">
    <text evidence="1">Catalyzes the reversible cyclization of carbamoyl aspartate to dihydroorotate.</text>
</comment>
<comment type="catalytic activity">
    <reaction evidence="1">
        <text>(S)-dihydroorotate + H2O = N-carbamoyl-L-aspartate + H(+)</text>
        <dbReference type="Rhea" id="RHEA:24296"/>
        <dbReference type="ChEBI" id="CHEBI:15377"/>
        <dbReference type="ChEBI" id="CHEBI:15378"/>
        <dbReference type="ChEBI" id="CHEBI:30864"/>
        <dbReference type="ChEBI" id="CHEBI:32814"/>
        <dbReference type="EC" id="3.5.2.3"/>
    </reaction>
</comment>
<comment type="cofactor">
    <cofactor evidence="1">
        <name>Zn(2+)</name>
        <dbReference type="ChEBI" id="CHEBI:29105"/>
    </cofactor>
    <text evidence="1">Binds 2 Zn(2+) ions per subunit.</text>
</comment>
<comment type="pathway">
    <text evidence="1">Pyrimidine metabolism; UMP biosynthesis via de novo pathway; (S)-dihydroorotate from bicarbonate: step 3/3.</text>
</comment>
<comment type="subunit">
    <text evidence="1">Homodimer.</text>
</comment>
<comment type="similarity">
    <text evidence="1">Belongs to the metallo-dependent hydrolases superfamily. DHOase family. Class II DHOase subfamily.</text>
</comment>
<feature type="chain" id="PRO_1000024007" description="Dihydroorotase">
    <location>
        <begin position="1"/>
        <end position="344"/>
    </location>
</feature>
<feature type="active site" evidence="1">
    <location>
        <position position="247"/>
    </location>
</feature>
<feature type="binding site" evidence="1">
    <location>
        <position position="13"/>
    </location>
    <ligand>
        <name>Zn(2+)</name>
        <dbReference type="ChEBI" id="CHEBI:29105"/>
        <label>1</label>
    </ligand>
</feature>
<feature type="binding site" evidence="1">
    <location>
        <begin position="15"/>
        <end position="17"/>
    </location>
    <ligand>
        <name>substrate</name>
    </ligand>
</feature>
<feature type="binding site" evidence="1">
    <location>
        <position position="15"/>
    </location>
    <ligand>
        <name>Zn(2+)</name>
        <dbReference type="ChEBI" id="CHEBI:29105"/>
        <label>1</label>
    </ligand>
</feature>
<feature type="binding site" evidence="1">
    <location>
        <position position="41"/>
    </location>
    <ligand>
        <name>substrate</name>
    </ligand>
</feature>
<feature type="binding site" description="via carbamate group" evidence="1">
    <location>
        <position position="99"/>
    </location>
    <ligand>
        <name>Zn(2+)</name>
        <dbReference type="ChEBI" id="CHEBI:29105"/>
        <label>1</label>
    </ligand>
</feature>
<feature type="binding site" description="via carbamate group" evidence="1">
    <location>
        <position position="99"/>
    </location>
    <ligand>
        <name>Zn(2+)</name>
        <dbReference type="ChEBI" id="CHEBI:29105"/>
        <label>2</label>
    </ligand>
</feature>
<feature type="binding site" evidence="1">
    <location>
        <position position="136"/>
    </location>
    <ligand>
        <name>substrate</name>
    </ligand>
</feature>
<feature type="binding site" evidence="1">
    <location>
        <position position="136"/>
    </location>
    <ligand>
        <name>Zn(2+)</name>
        <dbReference type="ChEBI" id="CHEBI:29105"/>
        <label>2</label>
    </ligand>
</feature>
<feature type="binding site" evidence="1">
    <location>
        <position position="174"/>
    </location>
    <ligand>
        <name>Zn(2+)</name>
        <dbReference type="ChEBI" id="CHEBI:29105"/>
        <label>2</label>
    </ligand>
</feature>
<feature type="binding site" evidence="1">
    <location>
        <position position="219"/>
    </location>
    <ligand>
        <name>substrate</name>
    </ligand>
</feature>
<feature type="binding site" evidence="1">
    <location>
        <position position="247"/>
    </location>
    <ligand>
        <name>Zn(2+)</name>
        <dbReference type="ChEBI" id="CHEBI:29105"/>
        <label>1</label>
    </ligand>
</feature>
<feature type="binding site" evidence="1">
    <location>
        <position position="251"/>
    </location>
    <ligand>
        <name>substrate</name>
    </ligand>
</feature>
<feature type="binding site" evidence="1">
    <location>
        <position position="263"/>
    </location>
    <ligand>
        <name>substrate</name>
    </ligand>
</feature>
<feature type="modified residue" description="N6-carboxylysine" evidence="1">
    <location>
        <position position="99"/>
    </location>
</feature>
<sequence length="344" mass="38867">MDTITLLQPDDWHAHLRDGLALKRTVPDLAQQFARAICMPNLVPPVKTVDEAEAYRERIMAHVPEGVHFDPRMVLYFTDHTSPSEVKKIKDSAHVNAIKLYPAGATTNSDNGVSDIRKVYAVIEQLEEHQVPLLLHGEVTHHHVDIFDREKRFLDEVLSPLLKQFPKLKLVLEHITTSEAAHFVLEQDRNVAATITPQHLLFNRNDMLVGGIKPHFYCLPILKRQTHQQTLIEVATSGNPKFFLGTDSAPHSKNAKENACGCAGCYSAPTAIELYAQAFDQVNKIERLEGFASHFGADFYGLPRNTNTITLVKEDQIIPEQLDYLDDEKIIPLYAGKTIQWRKV</sequence>
<accession>Q6FD29</accession>
<keyword id="KW-0378">Hydrolase</keyword>
<keyword id="KW-0479">Metal-binding</keyword>
<keyword id="KW-0665">Pyrimidine biosynthesis</keyword>
<keyword id="KW-0862">Zinc</keyword>
<evidence type="ECO:0000255" key="1">
    <source>
        <dbReference type="HAMAP-Rule" id="MF_00219"/>
    </source>
</evidence>
<proteinExistence type="inferred from homology"/>
<organism>
    <name type="scientific">Acinetobacter baylyi (strain ATCC 33305 / BD413 / ADP1)</name>
    <dbReference type="NCBI Taxonomy" id="62977"/>
    <lineage>
        <taxon>Bacteria</taxon>
        <taxon>Pseudomonadati</taxon>
        <taxon>Pseudomonadota</taxon>
        <taxon>Gammaproteobacteria</taxon>
        <taxon>Moraxellales</taxon>
        <taxon>Moraxellaceae</taxon>
        <taxon>Acinetobacter</taxon>
    </lineage>
</organism>
<dbReference type="EC" id="3.5.2.3" evidence="1"/>
<dbReference type="EMBL" id="CR543861">
    <property type="protein sequence ID" value="CAG68030.1"/>
    <property type="molecule type" value="Genomic_DNA"/>
</dbReference>
<dbReference type="RefSeq" id="WP_004921413.1">
    <property type="nucleotide sequence ID" value="NC_005966.1"/>
</dbReference>
<dbReference type="SMR" id="Q6FD29"/>
<dbReference type="STRING" id="202950.GCA_001485005_01220"/>
<dbReference type="MEROPS" id="M38.A02"/>
<dbReference type="GeneID" id="45233583"/>
<dbReference type="KEGG" id="aci:ACIAD1150"/>
<dbReference type="eggNOG" id="COG0418">
    <property type="taxonomic scope" value="Bacteria"/>
</dbReference>
<dbReference type="HOGENOM" id="CLU_041558_1_0_6"/>
<dbReference type="OrthoDB" id="9808095at2"/>
<dbReference type="BioCyc" id="ASP62977:ACIAD_RS05295-MONOMER"/>
<dbReference type="UniPathway" id="UPA00070">
    <property type="reaction ID" value="UER00117"/>
</dbReference>
<dbReference type="Proteomes" id="UP000000430">
    <property type="component" value="Chromosome"/>
</dbReference>
<dbReference type="GO" id="GO:0005829">
    <property type="term" value="C:cytosol"/>
    <property type="evidence" value="ECO:0007669"/>
    <property type="project" value="TreeGrafter"/>
</dbReference>
<dbReference type="GO" id="GO:0004151">
    <property type="term" value="F:dihydroorotase activity"/>
    <property type="evidence" value="ECO:0007669"/>
    <property type="project" value="UniProtKB-UniRule"/>
</dbReference>
<dbReference type="GO" id="GO:0008270">
    <property type="term" value="F:zinc ion binding"/>
    <property type="evidence" value="ECO:0007669"/>
    <property type="project" value="UniProtKB-UniRule"/>
</dbReference>
<dbReference type="GO" id="GO:0006207">
    <property type="term" value="P:'de novo' pyrimidine nucleobase biosynthetic process"/>
    <property type="evidence" value="ECO:0007669"/>
    <property type="project" value="TreeGrafter"/>
</dbReference>
<dbReference type="GO" id="GO:0044205">
    <property type="term" value="P:'de novo' UMP biosynthetic process"/>
    <property type="evidence" value="ECO:0007669"/>
    <property type="project" value="UniProtKB-UniRule"/>
</dbReference>
<dbReference type="CDD" id="cd01294">
    <property type="entry name" value="DHOase"/>
    <property type="match status" value="1"/>
</dbReference>
<dbReference type="FunFam" id="3.20.20.140:FF:000006">
    <property type="entry name" value="Dihydroorotase"/>
    <property type="match status" value="1"/>
</dbReference>
<dbReference type="Gene3D" id="3.20.20.140">
    <property type="entry name" value="Metal-dependent hydrolases"/>
    <property type="match status" value="1"/>
</dbReference>
<dbReference type="HAMAP" id="MF_00219">
    <property type="entry name" value="PyrC_classII"/>
    <property type="match status" value="1"/>
</dbReference>
<dbReference type="InterPro" id="IPR006680">
    <property type="entry name" value="Amidohydro-rel"/>
</dbReference>
<dbReference type="InterPro" id="IPR004721">
    <property type="entry name" value="DHOdimr"/>
</dbReference>
<dbReference type="InterPro" id="IPR002195">
    <property type="entry name" value="Dihydroorotase_CS"/>
</dbReference>
<dbReference type="InterPro" id="IPR032466">
    <property type="entry name" value="Metal_Hydrolase"/>
</dbReference>
<dbReference type="NCBIfam" id="TIGR00856">
    <property type="entry name" value="pyrC_dimer"/>
    <property type="match status" value="1"/>
</dbReference>
<dbReference type="PANTHER" id="PTHR43137">
    <property type="entry name" value="DIHYDROOROTASE"/>
    <property type="match status" value="1"/>
</dbReference>
<dbReference type="PANTHER" id="PTHR43137:SF1">
    <property type="entry name" value="DIHYDROOROTASE"/>
    <property type="match status" value="1"/>
</dbReference>
<dbReference type="Pfam" id="PF01979">
    <property type="entry name" value="Amidohydro_1"/>
    <property type="match status" value="1"/>
</dbReference>
<dbReference type="PIRSF" id="PIRSF001237">
    <property type="entry name" value="DHOdimr"/>
    <property type="match status" value="1"/>
</dbReference>
<dbReference type="SUPFAM" id="SSF51556">
    <property type="entry name" value="Metallo-dependent hydrolases"/>
    <property type="match status" value="1"/>
</dbReference>
<dbReference type="PROSITE" id="PS00482">
    <property type="entry name" value="DIHYDROOROTASE_1"/>
    <property type="match status" value="1"/>
</dbReference>
<dbReference type="PROSITE" id="PS00483">
    <property type="entry name" value="DIHYDROOROTASE_2"/>
    <property type="match status" value="1"/>
</dbReference>